<accession>Q4A936</accession>
<evidence type="ECO:0000255" key="1">
    <source>
        <dbReference type="HAMAP-Rule" id="MF_00607"/>
    </source>
</evidence>
<gene>
    <name evidence="1" type="primary">rsmA</name>
    <name evidence="1" type="synonym">ksgA</name>
    <name type="ordered locus">MHJ_0652</name>
</gene>
<dbReference type="EC" id="2.1.1.182" evidence="1"/>
<dbReference type="EMBL" id="AE017243">
    <property type="protein sequence ID" value="AAZ44735.2"/>
    <property type="molecule type" value="Genomic_DNA"/>
</dbReference>
<dbReference type="RefSeq" id="WP_044284731.1">
    <property type="nucleotide sequence ID" value="NC_007295.1"/>
</dbReference>
<dbReference type="SMR" id="Q4A936"/>
<dbReference type="GeneID" id="41334955"/>
<dbReference type="KEGG" id="mhj:MHJ_0652"/>
<dbReference type="eggNOG" id="COG0030">
    <property type="taxonomic scope" value="Bacteria"/>
</dbReference>
<dbReference type="HOGENOM" id="CLU_041220_0_1_14"/>
<dbReference type="OrthoDB" id="9814755at2"/>
<dbReference type="Proteomes" id="UP000000548">
    <property type="component" value="Chromosome"/>
</dbReference>
<dbReference type="GO" id="GO:0005829">
    <property type="term" value="C:cytosol"/>
    <property type="evidence" value="ECO:0007669"/>
    <property type="project" value="TreeGrafter"/>
</dbReference>
<dbReference type="GO" id="GO:0052908">
    <property type="term" value="F:16S rRNA (adenine(1518)-N(6)/adenine(1519)-N(6))-dimethyltransferase activity"/>
    <property type="evidence" value="ECO:0007669"/>
    <property type="project" value="UniProtKB-EC"/>
</dbReference>
<dbReference type="GO" id="GO:0003723">
    <property type="term" value="F:RNA binding"/>
    <property type="evidence" value="ECO:0007669"/>
    <property type="project" value="UniProtKB-KW"/>
</dbReference>
<dbReference type="CDD" id="cd02440">
    <property type="entry name" value="AdoMet_MTases"/>
    <property type="match status" value="1"/>
</dbReference>
<dbReference type="Gene3D" id="1.10.8.100">
    <property type="entry name" value="Ribosomal RNA adenine dimethylase-like, domain 2"/>
    <property type="match status" value="1"/>
</dbReference>
<dbReference type="Gene3D" id="3.40.50.150">
    <property type="entry name" value="Vaccinia Virus protein VP39"/>
    <property type="match status" value="1"/>
</dbReference>
<dbReference type="HAMAP" id="MF_00607">
    <property type="entry name" value="16SrRNA_methyltr_A"/>
    <property type="match status" value="1"/>
</dbReference>
<dbReference type="InterPro" id="IPR001737">
    <property type="entry name" value="KsgA/Erm"/>
</dbReference>
<dbReference type="InterPro" id="IPR023165">
    <property type="entry name" value="rRNA_Ade_diMease-like_C"/>
</dbReference>
<dbReference type="InterPro" id="IPR020596">
    <property type="entry name" value="rRNA_Ade_Mease_Trfase_CS"/>
</dbReference>
<dbReference type="InterPro" id="IPR020598">
    <property type="entry name" value="rRNA_Ade_methylase_Trfase_N"/>
</dbReference>
<dbReference type="InterPro" id="IPR011530">
    <property type="entry name" value="rRNA_adenine_dimethylase"/>
</dbReference>
<dbReference type="InterPro" id="IPR029063">
    <property type="entry name" value="SAM-dependent_MTases_sf"/>
</dbReference>
<dbReference type="NCBIfam" id="TIGR00755">
    <property type="entry name" value="ksgA"/>
    <property type="match status" value="1"/>
</dbReference>
<dbReference type="PANTHER" id="PTHR11727">
    <property type="entry name" value="DIMETHYLADENOSINE TRANSFERASE"/>
    <property type="match status" value="1"/>
</dbReference>
<dbReference type="PANTHER" id="PTHR11727:SF7">
    <property type="entry name" value="DIMETHYLADENOSINE TRANSFERASE-RELATED"/>
    <property type="match status" value="1"/>
</dbReference>
<dbReference type="Pfam" id="PF00398">
    <property type="entry name" value="RrnaAD"/>
    <property type="match status" value="1"/>
</dbReference>
<dbReference type="SMART" id="SM00650">
    <property type="entry name" value="rADc"/>
    <property type="match status" value="1"/>
</dbReference>
<dbReference type="SUPFAM" id="SSF53335">
    <property type="entry name" value="S-adenosyl-L-methionine-dependent methyltransferases"/>
    <property type="match status" value="1"/>
</dbReference>
<dbReference type="PROSITE" id="PS01131">
    <property type="entry name" value="RRNA_A_DIMETH"/>
    <property type="match status" value="1"/>
</dbReference>
<dbReference type="PROSITE" id="PS51689">
    <property type="entry name" value="SAM_RNA_A_N6_MT"/>
    <property type="match status" value="1"/>
</dbReference>
<proteinExistence type="inferred from homology"/>
<name>RSMA_MESHJ</name>
<keyword id="KW-0963">Cytoplasm</keyword>
<keyword id="KW-0489">Methyltransferase</keyword>
<keyword id="KW-0694">RNA-binding</keyword>
<keyword id="KW-0698">rRNA processing</keyword>
<keyword id="KW-0949">S-adenosyl-L-methionine</keyword>
<keyword id="KW-0808">Transferase</keyword>
<protein>
    <recommendedName>
        <fullName evidence="1">Ribosomal RNA small subunit methyltransferase A</fullName>
        <ecNumber evidence="1">2.1.1.182</ecNumber>
    </recommendedName>
    <alternativeName>
        <fullName evidence="1">16S rRNA (adenine(1518)-N(6)/adenine(1519)-N(6))-dimethyltransferase</fullName>
    </alternativeName>
    <alternativeName>
        <fullName evidence="1">16S rRNA dimethyladenosine transferase</fullName>
    </alternativeName>
    <alternativeName>
        <fullName evidence="1">16S rRNA dimethylase</fullName>
    </alternativeName>
    <alternativeName>
        <fullName evidence="1">S-adenosylmethionine-6-N', N'-adenosyl(rRNA) dimethyltransferase</fullName>
    </alternativeName>
</protein>
<sequence length="259" mass="30776">MQKPVPKKHLGQNFLKDRKIAEKIVENIDLKNKEIIEIGCGTGFLTNFLLEKAKFVTCYEIDRNLIPILEKKFKNKNLRIINEDFLLAELEFKEKKTIIANLPYYITSKILFKIFANFEKFDKIILMVQNEVADRIVAKPKTPTYSKLSLASQYIAHVKKLFVVGPDSFFPKPKINSAVVFFDLRTNLDAKKTEQFFWFTKKCFQFKRKTLYNNLIFFLNKQQIEKIYNFFQFAQNIRPQQLDLVTYIRLADFYFNNIF</sequence>
<reference key="1">
    <citation type="journal article" date="2005" name="J. Bacteriol.">
        <title>Swine and poultry pathogens: the complete genome sequences of two strains of Mycoplasma hyopneumoniae and a strain of Mycoplasma synoviae.</title>
        <authorList>
            <person name="Vasconcelos A.T.R."/>
            <person name="Ferreira H.B."/>
            <person name="Bizarro C.V."/>
            <person name="Bonatto S.L."/>
            <person name="Carvalho M.O."/>
            <person name="Pinto P.M."/>
            <person name="Almeida D.F."/>
            <person name="Almeida L.G.P."/>
            <person name="Almeida R."/>
            <person name="Alves-Junior L."/>
            <person name="Assuncao E.N."/>
            <person name="Azevedo V.A.C."/>
            <person name="Bogo M.R."/>
            <person name="Brigido M.M."/>
            <person name="Brocchi M."/>
            <person name="Burity H.A."/>
            <person name="Camargo A.A."/>
            <person name="Camargo S.S."/>
            <person name="Carepo M.S."/>
            <person name="Carraro D.M."/>
            <person name="de Mattos Cascardo J.C."/>
            <person name="Castro L.A."/>
            <person name="Cavalcanti G."/>
            <person name="Chemale G."/>
            <person name="Collevatti R.G."/>
            <person name="Cunha C.W."/>
            <person name="Dallagiovanna B."/>
            <person name="Dambros B.P."/>
            <person name="Dellagostin O.A."/>
            <person name="Falcao C."/>
            <person name="Fantinatti-Garboggini F."/>
            <person name="Felipe M.S.S."/>
            <person name="Fiorentin L."/>
            <person name="Franco G.R."/>
            <person name="Freitas N.S.A."/>
            <person name="Frias D."/>
            <person name="Grangeiro T.B."/>
            <person name="Grisard E.C."/>
            <person name="Guimaraes C.T."/>
            <person name="Hungria M."/>
            <person name="Jardim S.N."/>
            <person name="Krieger M.A."/>
            <person name="Laurino J.P."/>
            <person name="Lima L.F.A."/>
            <person name="Lopes M.I."/>
            <person name="Loreto E.L.S."/>
            <person name="Madeira H.M.F."/>
            <person name="Manfio G.P."/>
            <person name="Maranhao A.Q."/>
            <person name="Martinkovics C.T."/>
            <person name="Medeiros S.R.B."/>
            <person name="Moreira M.A.M."/>
            <person name="Neiva M."/>
            <person name="Ramalho-Neto C.E."/>
            <person name="Nicolas M.F."/>
            <person name="Oliveira S.C."/>
            <person name="Paixao R.F.C."/>
            <person name="Pedrosa F.O."/>
            <person name="Pena S.D.J."/>
            <person name="Pereira M."/>
            <person name="Pereira-Ferrari L."/>
            <person name="Piffer I."/>
            <person name="Pinto L.S."/>
            <person name="Potrich D.P."/>
            <person name="Salim A.C.M."/>
            <person name="Santos F.R."/>
            <person name="Schmitt R."/>
            <person name="Schneider M.P.C."/>
            <person name="Schrank A."/>
            <person name="Schrank I.S."/>
            <person name="Schuck A.F."/>
            <person name="Seuanez H.N."/>
            <person name="Silva D.W."/>
            <person name="Silva R."/>
            <person name="Silva S.C."/>
            <person name="Soares C.M.A."/>
            <person name="Souza K.R.L."/>
            <person name="Souza R.C."/>
            <person name="Staats C.C."/>
            <person name="Steffens M.B.R."/>
            <person name="Teixeira S.M.R."/>
            <person name="Urmenyi T.P."/>
            <person name="Vainstein M.H."/>
            <person name="Zuccherato L.W."/>
            <person name="Simpson A.J.G."/>
            <person name="Zaha A."/>
        </authorList>
    </citation>
    <scope>NUCLEOTIDE SEQUENCE [LARGE SCALE GENOMIC DNA]</scope>
    <source>
        <strain>J / ATCC 25934 / NCTC 10110</strain>
    </source>
</reference>
<organism>
    <name type="scientific">Mesomycoplasma hyopneumoniae (strain J / ATCC 25934 / NCTC 10110)</name>
    <name type="common">Mycoplasma hyopneumoniae</name>
    <dbReference type="NCBI Taxonomy" id="262719"/>
    <lineage>
        <taxon>Bacteria</taxon>
        <taxon>Bacillati</taxon>
        <taxon>Mycoplasmatota</taxon>
        <taxon>Mycoplasmoidales</taxon>
        <taxon>Metamycoplasmataceae</taxon>
        <taxon>Mesomycoplasma</taxon>
    </lineage>
</organism>
<comment type="function">
    <text evidence="1">Specifically dimethylates two adjacent adenosines (A1518 and A1519) in the loop of a conserved hairpin near the 3'-end of 16S rRNA in the 30S particle. May play a critical role in biogenesis of 30S subunits.</text>
</comment>
<comment type="catalytic activity">
    <reaction evidence="1">
        <text>adenosine(1518)/adenosine(1519) in 16S rRNA + 4 S-adenosyl-L-methionine = N(6)-dimethyladenosine(1518)/N(6)-dimethyladenosine(1519) in 16S rRNA + 4 S-adenosyl-L-homocysteine + 4 H(+)</text>
        <dbReference type="Rhea" id="RHEA:19609"/>
        <dbReference type="Rhea" id="RHEA-COMP:10232"/>
        <dbReference type="Rhea" id="RHEA-COMP:10233"/>
        <dbReference type="ChEBI" id="CHEBI:15378"/>
        <dbReference type="ChEBI" id="CHEBI:57856"/>
        <dbReference type="ChEBI" id="CHEBI:59789"/>
        <dbReference type="ChEBI" id="CHEBI:74411"/>
        <dbReference type="ChEBI" id="CHEBI:74493"/>
        <dbReference type="EC" id="2.1.1.182"/>
    </reaction>
</comment>
<comment type="subcellular location">
    <subcellularLocation>
        <location evidence="1">Cytoplasm</location>
    </subcellularLocation>
</comment>
<comment type="similarity">
    <text evidence="1">Belongs to the class I-like SAM-binding methyltransferase superfamily. rRNA adenine N(6)-methyltransferase family. RsmA subfamily.</text>
</comment>
<feature type="chain" id="PRO_0000257306" description="Ribosomal RNA small subunit methyltransferase A">
    <location>
        <begin position="1"/>
        <end position="259"/>
    </location>
</feature>
<feature type="binding site" evidence="1">
    <location>
        <position position="13"/>
    </location>
    <ligand>
        <name>S-adenosyl-L-methionine</name>
        <dbReference type="ChEBI" id="CHEBI:59789"/>
    </ligand>
</feature>
<feature type="binding site" evidence="1">
    <location>
        <position position="15"/>
    </location>
    <ligand>
        <name>S-adenosyl-L-methionine</name>
        <dbReference type="ChEBI" id="CHEBI:59789"/>
    </ligand>
</feature>
<feature type="binding site" evidence="1">
    <location>
        <position position="39"/>
    </location>
    <ligand>
        <name>S-adenosyl-L-methionine</name>
        <dbReference type="ChEBI" id="CHEBI:59789"/>
    </ligand>
</feature>
<feature type="binding site" evidence="1">
    <location>
        <position position="60"/>
    </location>
    <ligand>
        <name>S-adenosyl-L-methionine</name>
        <dbReference type="ChEBI" id="CHEBI:59789"/>
    </ligand>
</feature>
<feature type="binding site" evidence="1">
    <location>
        <position position="84"/>
    </location>
    <ligand>
        <name>S-adenosyl-L-methionine</name>
        <dbReference type="ChEBI" id="CHEBI:59789"/>
    </ligand>
</feature>
<feature type="binding site" evidence="1">
    <location>
        <position position="101"/>
    </location>
    <ligand>
        <name>S-adenosyl-L-methionine</name>
        <dbReference type="ChEBI" id="CHEBI:59789"/>
    </ligand>
</feature>